<proteinExistence type="evidence at protein level"/>
<protein>
    <recommendedName>
        <fullName>General amino acid permease AGP1</fullName>
    </recommendedName>
    <alternativeName>
        <fullName>Asparagine/glutamine permease</fullName>
    </alternativeName>
</protein>
<name>AGP1_YEAST</name>
<dbReference type="EMBL" id="X59720">
    <property type="protein sequence ID" value="CAA42360.2"/>
    <property type="status" value="ALT_FRAME"/>
    <property type="molecule type" value="Genomic_DNA"/>
</dbReference>
<dbReference type="EMBL" id="BK006937">
    <property type="protein sequence ID" value="DAA07460.1"/>
    <property type="molecule type" value="Genomic_DNA"/>
</dbReference>
<dbReference type="PIR" id="S19352">
    <property type="entry name" value="S19352"/>
</dbReference>
<dbReference type="RefSeq" id="NP_009905.3">
    <property type="nucleotide sequence ID" value="NM_001178671.1"/>
</dbReference>
<dbReference type="SMR" id="P25376"/>
<dbReference type="BioGRID" id="30959">
    <property type="interactions" value="285"/>
</dbReference>
<dbReference type="DIP" id="DIP-4973N"/>
<dbReference type="FunCoup" id="P25376">
    <property type="interactions" value="309"/>
</dbReference>
<dbReference type="IntAct" id="P25376">
    <property type="interactions" value="42"/>
</dbReference>
<dbReference type="MINT" id="P25376"/>
<dbReference type="STRING" id="4932.YCL025C"/>
<dbReference type="BindingDB" id="P25376"/>
<dbReference type="ChEMBL" id="CHEMBL1741178"/>
<dbReference type="TCDB" id="2.A.3.10.7">
    <property type="family name" value="the amino acid-polyamine-organocation (apc) family"/>
</dbReference>
<dbReference type="iPTMnet" id="P25376"/>
<dbReference type="SwissPalm" id="P25376"/>
<dbReference type="PaxDb" id="4932-YCL025C"/>
<dbReference type="PeptideAtlas" id="P25376"/>
<dbReference type="EnsemblFungi" id="YCL025C_mRNA">
    <property type="protein sequence ID" value="YCL025C"/>
    <property type="gene ID" value="YCL025C"/>
</dbReference>
<dbReference type="GeneID" id="850333"/>
<dbReference type="KEGG" id="sce:YCL025C"/>
<dbReference type="AGR" id="SGD:S000000530"/>
<dbReference type="SGD" id="S000000530">
    <property type="gene designation" value="AGP1"/>
</dbReference>
<dbReference type="VEuPathDB" id="FungiDB:YCL025C"/>
<dbReference type="eggNOG" id="KOG1286">
    <property type="taxonomic scope" value="Eukaryota"/>
</dbReference>
<dbReference type="GeneTree" id="ENSGT00940000176482"/>
<dbReference type="HOGENOM" id="CLU_007946_12_0_1"/>
<dbReference type="InParanoid" id="P25376"/>
<dbReference type="OMA" id="ACIMMIL"/>
<dbReference type="OrthoDB" id="3900342at2759"/>
<dbReference type="BioCyc" id="YEAST:G3O-29287-MONOMER"/>
<dbReference type="SABIO-RK" id="P25376"/>
<dbReference type="BioGRID-ORCS" id="850333">
    <property type="hits" value="5 hits in 10 CRISPR screens"/>
</dbReference>
<dbReference type="PRO" id="PR:P25376"/>
<dbReference type="Proteomes" id="UP000002311">
    <property type="component" value="Chromosome III"/>
</dbReference>
<dbReference type="RNAct" id="P25376">
    <property type="molecule type" value="protein"/>
</dbReference>
<dbReference type="GO" id="GO:0005783">
    <property type="term" value="C:endoplasmic reticulum"/>
    <property type="evidence" value="ECO:0007005"/>
    <property type="project" value="SGD"/>
</dbReference>
<dbReference type="GO" id="GO:0016020">
    <property type="term" value="C:membrane"/>
    <property type="evidence" value="ECO:0000318"/>
    <property type="project" value="GO_Central"/>
</dbReference>
<dbReference type="GO" id="GO:0005886">
    <property type="term" value="C:plasma membrane"/>
    <property type="evidence" value="ECO:0000314"/>
    <property type="project" value="SGD"/>
</dbReference>
<dbReference type="GO" id="GO:0015171">
    <property type="term" value="F:amino acid transmembrane transporter activity"/>
    <property type="evidence" value="ECO:0000314"/>
    <property type="project" value="SGD"/>
</dbReference>
<dbReference type="GO" id="GO:0015192">
    <property type="term" value="F:L-phenylalanine transmembrane transporter activity"/>
    <property type="evidence" value="ECO:0000315"/>
    <property type="project" value="CACAO"/>
</dbReference>
<dbReference type="GO" id="GO:0015193">
    <property type="term" value="F:L-proline transmembrane transporter activity"/>
    <property type="evidence" value="ECO:0000316"/>
    <property type="project" value="SGD"/>
</dbReference>
<dbReference type="GO" id="GO:0003333">
    <property type="term" value="P:amino acid transmembrane transport"/>
    <property type="evidence" value="ECO:0000318"/>
    <property type="project" value="GO_Central"/>
</dbReference>
<dbReference type="GO" id="GO:0006865">
    <property type="term" value="P:amino acid transport"/>
    <property type="evidence" value="ECO:0000314"/>
    <property type="project" value="SGD"/>
</dbReference>
<dbReference type="GO" id="GO:0098718">
    <property type="term" value="P:serine import across plasma membrane"/>
    <property type="evidence" value="ECO:0000315"/>
    <property type="project" value="SGD"/>
</dbReference>
<dbReference type="GO" id="GO:0055085">
    <property type="term" value="P:transmembrane transport"/>
    <property type="evidence" value="ECO:0000314"/>
    <property type="project" value="SGD"/>
</dbReference>
<dbReference type="FunFam" id="1.20.1740.10:FF:000017">
    <property type="entry name" value="Amino acid permease"/>
    <property type="match status" value="1"/>
</dbReference>
<dbReference type="Gene3D" id="1.20.1740.10">
    <property type="entry name" value="Amino acid/polyamine transporter I"/>
    <property type="match status" value="1"/>
</dbReference>
<dbReference type="InterPro" id="IPR004841">
    <property type="entry name" value="AA-permease/SLC12A_dom"/>
</dbReference>
<dbReference type="InterPro" id="IPR004840">
    <property type="entry name" value="Amino_acid_permease_CS"/>
</dbReference>
<dbReference type="InterPro" id="IPR004762">
    <property type="entry name" value="Amino_acid_permease_fungi"/>
</dbReference>
<dbReference type="InterPro" id="IPR050524">
    <property type="entry name" value="APC_YAT"/>
</dbReference>
<dbReference type="NCBIfam" id="TIGR00913">
    <property type="entry name" value="2A0310"/>
    <property type="match status" value="1"/>
</dbReference>
<dbReference type="PANTHER" id="PTHR43341">
    <property type="entry name" value="AMINO ACID PERMEASE"/>
    <property type="match status" value="1"/>
</dbReference>
<dbReference type="PANTHER" id="PTHR43341:SF17">
    <property type="entry name" value="GENERAL AMINO ACID PERMEASE AGP1-RELATED"/>
    <property type="match status" value="1"/>
</dbReference>
<dbReference type="Pfam" id="PF00324">
    <property type="entry name" value="AA_permease"/>
    <property type="match status" value="1"/>
</dbReference>
<dbReference type="PROSITE" id="PS00218">
    <property type="entry name" value="AMINO_ACID_PERMEASE_1"/>
    <property type="match status" value="1"/>
</dbReference>
<accession>P25376</accession>
<accession>D6VQZ1</accession>
<feature type="chain" id="PRO_0000054142" description="General amino acid permease AGP1">
    <location>
        <begin position="1"/>
        <end position="633"/>
    </location>
</feature>
<feature type="topological domain" description="Cytoplasmic" evidence="3">
    <location>
        <begin position="1"/>
        <end position="124"/>
    </location>
</feature>
<feature type="transmembrane region" description="Helical" evidence="3">
    <location>
        <begin position="125"/>
        <end position="145"/>
    </location>
</feature>
<feature type="topological domain" description="Extracellular" evidence="3">
    <location>
        <begin position="146"/>
        <end position="148"/>
    </location>
</feature>
<feature type="transmembrane region" description="Helical" evidence="3">
    <location>
        <begin position="149"/>
        <end position="169"/>
    </location>
</feature>
<feature type="topological domain" description="Cytoplasmic" evidence="3">
    <location>
        <begin position="170"/>
        <end position="197"/>
    </location>
</feature>
<feature type="transmembrane region" description="Helical" evidence="3">
    <location>
        <begin position="198"/>
        <end position="218"/>
    </location>
</feature>
<feature type="topological domain" description="Extracellular" evidence="3">
    <location>
        <begin position="219"/>
        <end position="231"/>
    </location>
</feature>
<feature type="transmembrane region" description="Helical" evidence="3">
    <location>
        <begin position="232"/>
        <end position="252"/>
    </location>
</feature>
<feature type="topological domain" description="Cytoplasmic" evidence="3">
    <location>
        <begin position="253"/>
        <end position="260"/>
    </location>
</feature>
<feature type="transmembrane region" description="Helical" evidence="3">
    <location>
        <begin position="261"/>
        <end position="281"/>
    </location>
</feature>
<feature type="topological domain" description="Extracellular" evidence="3">
    <location>
        <begin position="282"/>
        <end position="313"/>
    </location>
</feature>
<feature type="transmembrane region" description="Helical" evidence="3">
    <location>
        <begin position="314"/>
        <end position="334"/>
    </location>
</feature>
<feature type="topological domain" description="Cytoplasmic" evidence="3">
    <location>
        <begin position="335"/>
        <end position="352"/>
    </location>
</feature>
<feature type="transmembrane region" description="Helical" evidence="3">
    <location>
        <begin position="353"/>
        <end position="373"/>
    </location>
</feature>
<feature type="topological domain" description="Extracellular" evidence="3">
    <location>
        <begin position="374"/>
        <end position="402"/>
    </location>
</feature>
<feature type="transmembrane region" description="Helical" evidence="3">
    <location>
        <begin position="403"/>
        <end position="425"/>
    </location>
</feature>
<feature type="topological domain" description="Cytoplasmic" evidence="3">
    <location>
        <begin position="426"/>
        <end position="452"/>
    </location>
</feature>
<feature type="transmembrane region" description="Helical" evidence="3">
    <location>
        <begin position="453"/>
        <end position="473"/>
    </location>
</feature>
<feature type="topological domain" description="Extracellular" evidence="3">
    <location>
        <begin position="474"/>
        <end position="477"/>
    </location>
</feature>
<feature type="transmembrane region" description="Helical" evidence="3">
    <location>
        <begin position="478"/>
        <end position="498"/>
    </location>
</feature>
<feature type="topological domain" description="Cytoplasmic" evidence="3">
    <location>
        <begin position="499"/>
        <end position="531"/>
    </location>
</feature>
<feature type="transmembrane region" description="Helical" evidence="3">
    <location>
        <begin position="532"/>
        <end position="552"/>
    </location>
</feature>
<feature type="topological domain" description="Extracellular" evidence="3">
    <location>
        <begin position="553"/>
        <end position="560"/>
    </location>
</feature>
<feature type="transmembrane region" description="Helical" evidence="3">
    <location>
        <begin position="561"/>
        <end position="581"/>
    </location>
</feature>
<feature type="topological domain" description="Cytoplasmic" evidence="3">
    <location>
        <begin position="582"/>
        <end position="633"/>
    </location>
</feature>
<feature type="region of interest" description="Disordered" evidence="4">
    <location>
        <begin position="32"/>
        <end position="52"/>
    </location>
</feature>
<feature type="region of interest" description="Disordered" evidence="4">
    <location>
        <begin position="86"/>
        <end position="116"/>
    </location>
</feature>
<feature type="compositionally biased region" description="Polar residues" evidence="4">
    <location>
        <begin position="34"/>
        <end position="52"/>
    </location>
</feature>
<feature type="modified residue" description="Phosphoserine" evidence="2">
    <location>
        <position position="6"/>
    </location>
</feature>
<feature type="lipid moiety-binding region" description="S-palmitoyl cysteine" evidence="1">
    <location>
        <position position="633"/>
    </location>
</feature>
<feature type="cross-link" description="Glycyl lysine isopeptide (Lys-Gly) (interchain with G-Cter in ubiquitin)" evidence="2">
    <location>
        <position position="11"/>
    </location>
</feature>
<organism>
    <name type="scientific">Saccharomyces cerevisiae (strain ATCC 204508 / S288c)</name>
    <name type="common">Baker's yeast</name>
    <dbReference type="NCBI Taxonomy" id="559292"/>
    <lineage>
        <taxon>Eukaryota</taxon>
        <taxon>Fungi</taxon>
        <taxon>Dikarya</taxon>
        <taxon>Ascomycota</taxon>
        <taxon>Saccharomycotina</taxon>
        <taxon>Saccharomycetes</taxon>
        <taxon>Saccharomycetales</taxon>
        <taxon>Saccharomycetaceae</taxon>
        <taxon>Saccharomyces</taxon>
    </lineage>
</organism>
<evidence type="ECO:0000250" key="1"/>
<evidence type="ECO:0000250" key="2">
    <source>
        <dbReference type="UniProtKB" id="P48813"/>
    </source>
</evidence>
<evidence type="ECO:0000255" key="3"/>
<evidence type="ECO:0000256" key="4">
    <source>
        <dbReference type="SAM" id="MobiDB-lite"/>
    </source>
</evidence>
<evidence type="ECO:0000269" key="5">
    <source>
    </source>
</evidence>
<evidence type="ECO:0000269" key="6">
    <source>
    </source>
</evidence>
<evidence type="ECO:0000269" key="7">
    <source>
    </source>
</evidence>
<evidence type="ECO:0000269" key="8">
    <source>
    </source>
</evidence>
<evidence type="ECO:0000269" key="9">
    <source>
    </source>
</evidence>
<evidence type="ECO:0000269" key="10">
    <source>
    </source>
</evidence>
<evidence type="ECO:0000269" key="11">
    <source>
    </source>
</evidence>
<evidence type="ECO:0000269" key="12">
    <source>
    </source>
</evidence>
<evidence type="ECO:0000305" key="13"/>
<gene>
    <name type="primary">AGP1</name>
    <name type="ordered locus">YCL025C</name>
    <name type="ORF">YCL25C</name>
</gene>
<sequence length="633" mass="69671">MSSSKSLYELKDLKNSSTEIHATGQDNEIEYFETGSNDRPSSQPHLGYEQHNTSAVRRFFDSFKRADQGPQDEVEATQMNDLTSAISPSSRQAQELEKNESSDNIGANTGHKSDSLKKTIQPRHVLMIALGTGIGTGLLVGNGTALVHAGPAGLLIGYAIMGSILYCIIQACGEMALVYSNLTGGYNAYPSFLVDDGFGFAVAWVYCLQWLCVCPLELVTASMTIKYWTTSVNPDVFVIIFYVLVITINIFGARGYAEAEFFFNCCKILMMTGFFILGIIIDVGGAGNDGFIGGKYWHDPGAFNGKHAIDRFKGVAATLVTAAFAFGGSEFIAITTAEQSNPRKAIPGAAKQMIYRILFLFLATIILLGFLVPYNSDQLLGSTGGGTKASPYVIAVASHGVRVVPHFINAVILLSVLSMANSSFYSSARLFLTLSEQGYAPKVFSYIDRAGRPLIAMGVSALFAVIAFCAASPKEEQVFTWLLAISGLSQLFTWTAICLSHLRFRRAMKVQGRSLGELGFKSQTGVWGSAYACIMMILILIAQFWVAIAPIGEGKLDAQAFFENYLAMPILIALYVGYKVWHKDWKLFIRADKIDLDSHRQIFDEELIKQEDEEYRERLRNGPYWKRVVAFWC</sequence>
<keyword id="KW-0029">Amino-acid transport</keyword>
<keyword id="KW-1003">Cell membrane</keyword>
<keyword id="KW-1017">Isopeptide bond</keyword>
<keyword id="KW-0449">Lipoprotein</keyword>
<keyword id="KW-0472">Membrane</keyword>
<keyword id="KW-0564">Palmitate</keyword>
<keyword id="KW-0597">Phosphoprotein</keyword>
<keyword id="KW-1185">Reference proteome</keyword>
<keyword id="KW-0812">Transmembrane</keyword>
<keyword id="KW-1133">Transmembrane helix</keyword>
<keyword id="KW-0813">Transport</keyword>
<keyword id="KW-0832">Ubl conjugation</keyword>
<reference key="1">
    <citation type="journal article" date="1992" name="Nature">
        <title>The complete DNA sequence of yeast chromosome III.</title>
        <authorList>
            <person name="Oliver S.G."/>
            <person name="van der Aart Q.J.M."/>
            <person name="Agostoni-Carbone M.L."/>
            <person name="Aigle M."/>
            <person name="Alberghina L."/>
            <person name="Alexandraki D."/>
            <person name="Antoine G."/>
            <person name="Anwar R."/>
            <person name="Ballesta J.P.G."/>
            <person name="Benit P."/>
            <person name="Berben G."/>
            <person name="Bergantino E."/>
            <person name="Biteau N."/>
            <person name="Bolle P.-A."/>
            <person name="Bolotin-Fukuhara M."/>
            <person name="Brown A."/>
            <person name="Brown A.J.P."/>
            <person name="Buhler J.-M."/>
            <person name="Carcano C."/>
            <person name="Carignani G."/>
            <person name="Cederberg H."/>
            <person name="Chanet R."/>
            <person name="Contreras R."/>
            <person name="Crouzet M."/>
            <person name="Daignan-Fornier B."/>
            <person name="Defoor E."/>
            <person name="Delgado M.D."/>
            <person name="Demolder J."/>
            <person name="Doira C."/>
            <person name="Dubois E."/>
            <person name="Dujon B."/>
            <person name="Duesterhoeft A."/>
            <person name="Erdmann D."/>
            <person name="Esteban M."/>
            <person name="Fabre F."/>
            <person name="Fairhead C."/>
            <person name="Faye G."/>
            <person name="Feldmann H."/>
            <person name="Fiers W."/>
            <person name="Francingues-Gaillard M.-C."/>
            <person name="Franco L."/>
            <person name="Frontali L."/>
            <person name="Fukuhara H."/>
            <person name="Fuller L.J."/>
            <person name="Galland P."/>
            <person name="Gent M.E."/>
            <person name="Gigot D."/>
            <person name="Gilliquet V."/>
            <person name="Glansdorff N."/>
            <person name="Goffeau A."/>
            <person name="Grenson M."/>
            <person name="Grisanti P."/>
            <person name="Grivell L.A."/>
            <person name="de Haan M."/>
            <person name="Haasemann M."/>
            <person name="Hatat D."/>
            <person name="Hoenicka J."/>
            <person name="Hegemann J.H."/>
            <person name="Herbert C.J."/>
            <person name="Hilger F."/>
            <person name="Hohmann S."/>
            <person name="Hollenberg C.P."/>
            <person name="Huse K."/>
            <person name="Iborra F."/>
            <person name="Indge K.J."/>
            <person name="Isono K."/>
            <person name="Jacq C."/>
            <person name="Jacquet M."/>
            <person name="James C.M."/>
            <person name="Jauniaux J.-C."/>
            <person name="Jia Y."/>
            <person name="Jimenez A."/>
            <person name="Kelly A."/>
            <person name="Kleinhans U."/>
            <person name="Kreisl P."/>
            <person name="Lanfranchi G."/>
            <person name="Lewis C."/>
            <person name="van der Linden C.G."/>
            <person name="Lucchini G."/>
            <person name="Lutzenkirchen K."/>
            <person name="Maat M.J."/>
            <person name="Mallet L."/>
            <person name="Mannhaupt G."/>
            <person name="Martegani E."/>
            <person name="Mathieu A."/>
            <person name="Maurer C.T.C."/>
            <person name="McConnell D."/>
            <person name="McKee R.A."/>
            <person name="Messenguy F."/>
            <person name="Mewes H.-W."/>
            <person name="Molemans F."/>
            <person name="Montague M.A."/>
            <person name="Muzi Falconi M."/>
            <person name="Navas L."/>
            <person name="Newlon C.S."/>
            <person name="Noone D."/>
            <person name="Pallier C."/>
            <person name="Panzeri L."/>
            <person name="Pearson B.M."/>
            <person name="Perea J."/>
            <person name="Philippsen P."/>
            <person name="Pierard A."/>
            <person name="Planta R.J."/>
            <person name="Plevani P."/>
            <person name="Poetsch B."/>
            <person name="Pohl F.M."/>
            <person name="Purnelle B."/>
            <person name="Ramezani Rad M."/>
            <person name="Rasmussen S.W."/>
            <person name="Raynal A."/>
            <person name="Remacha M.A."/>
            <person name="Richterich P."/>
            <person name="Roberts A.B."/>
            <person name="Rodriguez F."/>
            <person name="Sanz E."/>
            <person name="Schaaff-Gerstenschlaeger I."/>
            <person name="Scherens B."/>
            <person name="Schweitzer B."/>
            <person name="Shu Y."/>
            <person name="Skala J."/>
            <person name="Slonimski P.P."/>
            <person name="Sor F."/>
            <person name="Soustelle C."/>
            <person name="Spiegelberg R."/>
            <person name="Stateva L.I."/>
            <person name="Steensma H.Y."/>
            <person name="Steiner S."/>
            <person name="Thierry A."/>
            <person name="Thireos G."/>
            <person name="Tzermia M."/>
            <person name="Urrestarazu L.A."/>
            <person name="Valle G."/>
            <person name="Vetter I."/>
            <person name="van Vliet-Reedijk J.C."/>
            <person name="Voet M."/>
            <person name="Volckaert G."/>
            <person name="Vreken P."/>
            <person name="Wang H."/>
            <person name="Warmington J.R."/>
            <person name="von Wettstein D."/>
            <person name="Wicksteed B.L."/>
            <person name="Wilson C."/>
            <person name="Wurst H."/>
            <person name="Xu G."/>
            <person name="Yoshikawa A."/>
            <person name="Zimmermann F.K."/>
            <person name="Sgouros J.G."/>
        </authorList>
    </citation>
    <scope>NUCLEOTIDE SEQUENCE [LARGE SCALE GENOMIC DNA]</scope>
    <source>
        <strain>ATCC 204508 / S288c</strain>
    </source>
</reference>
<reference key="2">
    <citation type="submission" date="2001-06" db="EMBL/GenBank/DDBJ databases">
        <authorList>
            <person name="Valles G."/>
            <person name="Volckaerts G."/>
        </authorList>
    </citation>
    <scope>SEQUENCE REVISION TO 191-192; 194-197; 316 AND C-TERMINUS</scope>
</reference>
<reference key="3">
    <citation type="journal article" date="2014" name="G3 (Bethesda)">
        <title>The reference genome sequence of Saccharomyces cerevisiae: Then and now.</title>
        <authorList>
            <person name="Engel S.R."/>
            <person name="Dietrich F.S."/>
            <person name="Fisk D.G."/>
            <person name="Binkley G."/>
            <person name="Balakrishnan R."/>
            <person name="Costanzo M.C."/>
            <person name="Dwight S.S."/>
            <person name="Hitz B.C."/>
            <person name="Karra K."/>
            <person name="Nash R.S."/>
            <person name="Weng S."/>
            <person name="Wong E.D."/>
            <person name="Lloyd P."/>
            <person name="Skrzypek M.S."/>
            <person name="Miyasato S.R."/>
            <person name="Simison M."/>
            <person name="Cherry J.M."/>
        </authorList>
    </citation>
    <scope>GENOME REANNOTATION</scope>
    <source>
        <strain>ATCC 204508 / S288c</strain>
    </source>
</reference>
<reference key="4">
    <citation type="journal article" date="1998" name="J. Bacteriol.">
        <title>The Saccharomyces cerevisiae YCC5 (YCL025c) gene encodes an amino acid permease, Agp1, which transports asparagine and glutamine.</title>
        <authorList>
            <person name="Schreve J.L."/>
            <person name="Sin J.K."/>
            <person name="Garrett J.M."/>
        </authorList>
    </citation>
    <scope>CHARACTERIZATION</scope>
    <scope>IDENTIFICATION OF FRAMESHIFT</scope>
</reference>
<reference key="5">
    <citation type="journal article" date="1999" name="Curr. Genet.">
        <title>Cysteine uptake by Saccharomyces cerevisiae is accomplished by multiple permeases.</title>
        <authorList>
            <person name="During-Olsen L."/>
            <person name="Regenberg B."/>
            <person name="Gjermansen C."/>
            <person name="Kielland-Brandt M.C."/>
            <person name="Hansen J."/>
        </authorList>
    </citation>
    <scope>FUNCTION IN L-CYSTEINE UPTAKE</scope>
</reference>
<reference key="6">
    <citation type="journal article" date="1999" name="Curr. Genet.">
        <title>Substrate specificity and gene expression of the amino-acid permeases in Saccharomyces cerevisiae.</title>
        <authorList>
            <person name="Regenberg B."/>
            <person name="During-Olsen L."/>
            <person name="Kielland-Brandt M.C."/>
            <person name="Holmberg S."/>
        </authorList>
    </citation>
    <scope>FUNCTION</scope>
</reference>
<reference key="7">
    <citation type="journal article" date="1999" name="Mol. Cell. Biol.">
        <title>Amino acid signaling in Saccharomyces cerevisiae: a permease-like sensor of external amino acids and F-Box protein Grr1p are required for transcriptional induction of the AGP1 gene, which encodes a broad-specificity amino acid permease.</title>
        <authorList>
            <person name="Iraqui I."/>
            <person name="Vissers S."/>
            <person name="Bernard F."/>
            <person name="de Craene J.-O."/>
            <person name="Boles E."/>
            <person name="Urrestarazu A."/>
            <person name="Andre B."/>
        </authorList>
    </citation>
    <scope>INDUCTION</scope>
</reference>
<reference key="8">
    <citation type="journal article" date="2001" name="Mol. Cell. Biol.">
        <title>Genetic and biochemical analysis of the yeast plasma membrane Ssy1p-Ptr3p-Ssy5p sensor of extracellular amino acids.</title>
        <authorList>
            <person name="Forsberg H."/>
            <person name="Ljungdahl P.O."/>
        </authorList>
    </citation>
    <scope>INDUCTION BY SPS</scope>
</reference>
<reference key="9">
    <citation type="journal article" date="2003" name="Genome Biol.">
        <title>Reinvestigation of the Saccharomyces cerevisiae genome annotation by comparison to the genome of a related fungus: Ashbya gossypii.</title>
        <authorList>
            <person name="Brachat S."/>
            <person name="Dietrich F.S."/>
            <person name="Voegeli S."/>
            <person name="Zhang Z."/>
            <person name="Stuart L."/>
            <person name="Lerch A."/>
            <person name="Gates K."/>
            <person name="Gaffney T.D."/>
            <person name="Philippsen P."/>
        </authorList>
    </citation>
    <scope>IDENTIFICATION OF FRAMESHIFT</scope>
</reference>
<reference key="10">
    <citation type="journal article" date="2003" name="Nature">
        <title>Global analysis of protein expression in yeast.</title>
        <authorList>
            <person name="Ghaemmaghami S."/>
            <person name="Huh W.-K."/>
            <person name="Bower K."/>
            <person name="Howson R.W."/>
            <person name="Belle A."/>
            <person name="Dephoure N."/>
            <person name="O'Shea E.K."/>
            <person name="Weissman J.S."/>
        </authorList>
    </citation>
    <scope>LEVEL OF PROTEIN EXPRESSION [LARGE SCALE ANALYSIS]</scope>
</reference>
<reference key="11">
    <citation type="journal article" date="2004" name="Biochem. Biophys. Res. Commun.">
        <title>Yeast Agp2p and Agp3p function as amino acid permeases in poor nutrient conditions.</title>
        <authorList>
            <person name="Schreve J.L."/>
            <person name="Garrett J.M."/>
        </authorList>
    </citation>
    <scope>BIOPHYSICOCHEMICAL PROPERTIES</scope>
</reference>
<reference key="12">
    <citation type="journal article" date="2004" name="Genetics">
        <title>The external amino acid signaling pathway promotes activation of Stp1 and Uga35/Dal81 transcription factors for induction of the AGP1 gene in Saccharomyces cerevisiae.</title>
        <authorList>
            <person name="Abdel-Sater F."/>
            <person name="Iraqui I."/>
            <person name="Urrestarazu A."/>
            <person name="Andre B."/>
        </authorList>
    </citation>
    <scope>INDUCTION BY DAL81 AND STP1</scope>
</reference>
<reference key="13">
    <citation type="journal article" date="2006" name="Cell">
        <title>Global analysis of protein palmitoylation in yeast.</title>
        <authorList>
            <person name="Roth A.F."/>
            <person name="Wan J."/>
            <person name="Bailey A.O."/>
            <person name="Sun B."/>
            <person name="Kuchar J.A."/>
            <person name="Green W.N."/>
            <person name="Phinney B.S."/>
            <person name="Yates J.R. III"/>
            <person name="Davis N.G."/>
        </authorList>
    </citation>
    <scope>PALMITOYLATION</scope>
</reference>
<reference key="14">
    <citation type="journal article" date="2006" name="Proc. Natl. Acad. Sci. U.S.A.">
        <title>A global topology map of the Saccharomyces cerevisiae membrane proteome.</title>
        <authorList>
            <person name="Kim H."/>
            <person name="Melen K."/>
            <person name="Oesterberg M."/>
            <person name="von Heijne G."/>
        </authorList>
    </citation>
    <scope>TOPOLOGY [LARGE SCALE ANALYSIS]</scope>
    <source>
        <strain>ATCC 208353 / W303-1A</strain>
    </source>
</reference>
<reference key="15">
    <citation type="journal article" date="2008" name="Mol. Cell. Proteomics">
        <title>A multidimensional chromatography technology for in-depth phosphoproteome analysis.</title>
        <authorList>
            <person name="Albuquerque C.P."/>
            <person name="Smolka M.B."/>
            <person name="Payne S.H."/>
            <person name="Bafna V."/>
            <person name="Eng J."/>
            <person name="Zhou H."/>
        </authorList>
    </citation>
    <scope>IDENTIFICATION BY MASS SPECTROMETRY [LARGE SCALE ANALYSIS]</scope>
</reference>
<reference key="16">
    <citation type="journal article" date="2009" name="Science">
        <title>Global analysis of Cdk1 substrate phosphorylation sites provides insights into evolution.</title>
        <authorList>
            <person name="Holt L.J."/>
            <person name="Tuch B.B."/>
            <person name="Villen J."/>
            <person name="Johnson A.D."/>
            <person name="Gygi S.P."/>
            <person name="Morgan D.O."/>
        </authorList>
    </citation>
    <scope>IDENTIFICATION BY MASS SPECTROMETRY [LARGE SCALE ANALYSIS]</scope>
</reference>
<comment type="function">
    <text evidence="5 6">Broad substrate range permease which transports asparagine and glutamine with intermediate specificity. Also transports Ala, Cys, Gly, Ile, Leu, Met, Phe, Ser, Thr, Tyr and Val. Important for the utilization of amino acids as a nitrogen source.</text>
</comment>
<comment type="biophysicochemical properties">
    <kinetics>
        <KM evidence="9">0.23 mM for leucine</KM>
        <Vmax evidence="9">2.6 nmol/min/mg enzyme for leucine transport</Vmax>
    </kinetics>
</comment>
<comment type="subcellular location">
    <subcellularLocation>
        <location evidence="1">Cell membrane</location>
        <topology evidence="1">Multi-pass membrane protein</topology>
    </subcellularLocation>
</comment>
<comment type="induction">
    <text evidence="7 10 12">Induced by transcription factors DAL81 and STP1, which are activated by a signal initiated by the plasma membrane SPS (SSY1-PTR3-SSY5) amino acid sensor system in response to external amino acid levels.</text>
</comment>
<comment type="PTM">
    <text evidence="11">Palmitoylated by PFA4.</text>
</comment>
<comment type="miscellaneous">
    <text evidence="8">Present with 21100 molecules/cell in log phase SD medium.</text>
</comment>
<comment type="similarity">
    <text evidence="13">Belongs to the amino acid-polyamine-organocation (APC) superfamily. YAT (TC 2.A.3.10) family.</text>
</comment>
<comment type="sequence caution" evidence="13">
    <conflict type="frameshift">
        <sequence resource="EMBL-CDS" id="CAA42360"/>
    </conflict>
</comment>